<feature type="chain" id="PRO_0000295091" description="ATP-dependent DNA helicase PIF1">
    <location>
        <begin position="1"/>
        <end position="650"/>
    </location>
</feature>
<feature type="DNA-binding region" evidence="3">
    <location>
        <begin position="586"/>
        <end position="605"/>
    </location>
</feature>
<feature type="region of interest" description="PINT" evidence="1">
    <location>
        <begin position="14"/>
        <end position="192"/>
    </location>
</feature>
<feature type="region of interest" description="Disordered" evidence="4">
    <location>
        <begin position="171"/>
        <end position="199"/>
    </location>
</feature>
<feature type="region of interest" description="Disordered" evidence="4">
    <location>
        <begin position="631"/>
        <end position="650"/>
    </location>
</feature>
<feature type="compositionally biased region" description="Acidic residues" evidence="4">
    <location>
        <begin position="633"/>
        <end position="650"/>
    </location>
</feature>
<feature type="binding site" evidence="3">
    <location>
        <begin position="237"/>
        <end position="244"/>
    </location>
    <ligand>
        <name>ATP</name>
        <dbReference type="ChEBI" id="CHEBI:30616"/>
    </ligand>
</feature>
<feature type="modified residue" description="Phosphoserine" evidence="2">
    <location>
        <position position="40"/>
    </location>
</feature>
<feature type="modified residue" description="Phosphoserine" evidence="2">
    <location>
        <position position="164"/>
    </location>
</feature>
<feature type="splice variant" id="VSP_047458" description="In isoform 3." evidence="8">
    <location>
        <begin position="1"/>
        <end position="66"/>
    </location>
</feature>
<feature type="splice variant" id="VSP_026718" description="In isoform 2." evidence="7">
    <original>TGKSYLLKHILGSLPPTGTVATASTGVAACHI</original>
    <variation>NRAGIRWWAALGGSRQATLTLPTTQGQESPTC</variation>
    <location>
        <begin position="241"/>
        <end position="272"/>
    </location>
</feature>
<feature type="splice variant" id="VSP_026719" description="In isoform 2." evidence="7">
    <location>
        <begin position="273"/>
        <end position="650"/>
    </location>
</feature>
<feature type="sequence conflict" description="In Ref. 1; AAS77397 and 2; AAM50051/AAM50052." evidence="8" ref="1 2">
    <original>P</original>
    <variation>L</variation>
    <location>
        <position position="79"/>
    </location>
</feature>
<feature type="sequence conflict" description="In Ref. 1; AAS77397 and 2; AAM50051/AAM50052." evidence="8" ref="1 2">
    <original>P</original>
    <variation>L</variation>
    <location>
        <position position="109"/>
    </location>
</feature>
<feature type="sequence conflict" description="In Ref. 4; AAH46611." evidence="8" ref="4">
    <original>P</original>
    <variation>S</variation>
    <location>
        <position position="122"/>
    </location>
</feature>
<feature type="sequence conflict" description="In Ref. 4; AAH46611." evidence="8" ref="4">
    <original>K</original>
    <variation>R</variation>
    <location>
        <position position="339"/>
    </location>
</feature>
<feature type="sequence conflict" description="In Ref. 4; AAH46611." evidence="8" ref="4">
    <original>Q</original>
    <variation>R</variation>
    <location>
        <position position="367"/>
    </location>
</feature>
<feature type="sequence conflict" description="In Ref. 4; AAH46611." evidence="8" ref="4">
    <original>W</original>
    <variation>R</variation>
    <location>
        <position position="448"/>
    </location>
</feature>
<protein>
    <recommendedName>
        <fullName evidence="3">ATP-dependent DNA helicase PIF1</fullName>
        <ecNumber evidence="3">5.6.2.3</ecNumber>
    </recommendedName>
    <alternativeName>
        <fullName evidence="3">DNA 5'-3' helicase PIF1</fullName>
    </alternativeName>
    <alternativeName>
        <fullName evidence="3">DNA repair and recombination helicase PIF1</fullName>
    </alternativeName>
    <alternativeName>
        <fullName>Pif1/Rrm3 DNA helicase-like protein</fullName>
    </alternativeName>
</protein>
<reference key="1">
    <citation type="journal article" date="2007" name="Mol. Cell. Biol.">
        <title>Murine Pif1 interacts with telomerase and is dispensable for telomere function in vivo.</title>
        <authorList>
            <person name="Snow B.E."/>
            <person name="Mateyak M."/>
            <person name="Paderova J."/>
            <person name="Wakeham A."/>
            <person name="Iorio C."/>
            <person name="Zakian V."/>
            <person name="Squire J."/>
            <person name="Harrington L."/>
        </authorList>
    </citation>
    <scope>NUCLEOTIDE SEQUENCE [MRNA] (ISOFORM 1)</scope>
    <scope>DISRUPTION PHENOTYPE</scope>
    <scope>SUBCELLULAR LOCATION</scope>
    <scope>INTERACTION WITH TELOMERASE</scope>
</reference>
<reference key="2">
    <citation type="submission" date="2002-04" db="EMBL/GenBank/DDBJ databases">
        <title>Assignment of the mouse Pif1 gene to mouse chromosome 9D by FISH and interspecific backcross analyses.</title>
        <authorList>
            <person name="Lo A.W.I."/>
            <person name="Murnane J.P."/>
        </authorList>
    </citation>
    <scope>NUCLEOTIDE SEQUENCE [MRNA] (ISOFORM 1)</scope>
    <source>
        <strain>129/SvJ</strain>
    </source>
</reference>
<reference key="3">
    <citation type="journal article" date="2005" name="Science">
        <title>The transcriptional landscape of the mammalian genome.</title>
        <authorList>
            <person name="Carninci P."/>
            <person name="Kasukawa T."/>
            <person name="Katayama S."/>
            <person name="Gough J."/>
            <person name="Frith M.C."/>
            <person name="Maeda N."/>
            <person name="Oyama R."/>
            <person name="Ravasi T."/>
            <person name="Lenhard B."/>
            <person name="Wells C."/>
            <person name="Kodzius R."/>
            <person name="Shimokawa K."/>
            <person name="Bajic V.B."/>
            <person name="Brenner S.E."/>
            <person name="Batalov S."/>
            <person name="Forrest A.R."/>
            <person name="Zavolan M."/>
            <person name="Davis M.J."/>
            <person name="Wilming L.G."/>
            <person name="Aidinis V."/>
            <person name="Allen J.E."/>
            <person name="Ambesi-Impiombato A."/>
            <person name="Apweiler R."/>
            <person name="Aturaliya R.N."/>
            <person name="Bailey T.L."/>
            <person name="Bansal M."/>
            <person name="Baxter L."/>
            <person name="Beisel K.W."/>
            <person name="Bersano T."/>
            <person name="Bono H."/>
            <person name="Chalk A.M."/>
            <person name="Chiu K.P."/>
            <person name="Choudhary V."/>
            <person name="Christoffels A."/>
            <person name="Clutterbuck D.R."/>
            <person name="Crowe M.L."/>
            <person name="Dalla E."/>
            <person name="Dalrymple B.P."/>
            <person name="de Bono B."/>
            <person name="Della Gatta G."/>
            <person name="di Bernardo D."/>
            <person name="Down T."/>
            <person name="Engstrom P."/>
            <person name="Fagiolini M."/>
            <person name="Faulkner G."/>
            <person name="Fletcher C.F."/>
            <person name="Fukushima T."/>
            <person name="Furuno M."/>
            <person name="Futaki S."/>
            <person name="Gariboldi M."/>
            <person name="Georgii-Hemming P."/>
            <person name="Gingeras T.R."/>
            <person name="Gojobori T."/>
            <person name="Green R.E."/>
            <person name="Gustincich S."/>
            <person name="Harbers M."/>
            <person name="Hayashi Y."/>
            <person name="Hensch T.K."/>
            <person name="Hirokawa N."/>
            <person name="Hill D."/>
            <person name="Huminiecki L."/>
            <person name="Iacono M."/>
            <person name="Ikeo K."/>
            <person name="Iwama A."/>
            <person name="Ishikawa T."/>
            <person name="Jakt M."/>
            <person name="Kanapin A."/>
            <person name="Katoh M."/>
            <person name="Kawasawa Y."/>
            <person name="Kelso J."/>
            <person name="Kitamura H."/>
            <person name="Kitano H."/>
            <person name="Kollias G."/>
            <person name="Krishnan S.P."/>
            <person name="Kruger A."/>
            <person name="Kummerfeld S.K."/>
            <person name="Kurochkin I.V."/>
            <person name="Lareau L.F."/>
            <person name="Lazarevic D."/>
            <person name="Lipovich L."/>
            <person name="Liu J."/>
            <person name="Liuni S."/>
            <person name="McWilliam S."/>
            <person name="Madan Babu M."/>
            <person name="Madera M."/>
            <person name="Marchionni L."/>
            <person name="Matsuda H."/>
            <person name="Matsuzawa S."/>
            <person name="Miki H."/>
            <person name="Mignone F."/>
            <person name="Miyake S."/>
            <person name="Morris K."/>
            <person name="Mottagui-Tabar S."/>
            <person name="Mulder N."/>
            <person name="Nakano N."/>
            <person name="Nakauchi H."/>
            <person name="Ng P."/>
            <person name="Nilsson R."/>
            <person name="Nishiguchi S."/>
            <person name="Nishikawa S."/>
            <person name="Nori F."/>
            <person name="Ohara O."/>
            <person name="Okazaki Y."/>
            <person name="Orlando V."/>
            <person name="Pang K.C."/>
            <person name="Pavan W.J."/>
            <person name="Pavesi G."/>
            <person name="Pesole G."/>
            <person name="Petrovsky N."/>
            <person name="Piazza S."/>
            <person name="Reed J."/>
            <person name="Reid J.F."/>
            <person name="Ring B.Z."/>
            <person name="Ringwald M."/>
            <person name="Rost B."/>
            <person name="Ruan Y."/>
            <person name="Salzberg S.L."/>
            <person name="Sandelin A."/>
            <person name="Schneider C."/>
            <person name="Schoenbach C."/>
            <person name="Sekiguchi K."/>
            <person name="Semple C.A."/>
            <person name="Seno S."/>
            <person name="Sessa L."/>
            <person name="Sheng Y."/>
            <person name="Shibata Y."/>
            <person name="Shimada H."/>
            <person name="Shimada K."/>
            <person name="Silva D."/>
            <person name="Sinclair B."/>
            <person name="Sperling S."/>
            <person name="Stupka E."/>
            <person name="Sugiura K."/>
            <person name="Sultana R."/>
            <person name="Takenaka Y."/>
            <person name="Taki K."/>
            <person name="Tammoja K."/>
            <person name="Tan S.L."/>
            <person name="Tang S."/>
            <person name="Taylor M.S."/>
            <person name="Tegner J."/>
            <person name="Teichmann S.A."/>
            <person name="Ueda H.R."/>
            <person name="van Nimwegen E."/>
            <person name="Verardo R."/>
            <person name="Wei C.L."/>
            <person name="Yagi K."/>
            <person name="Yamanishi H."/>
            <person name="Zabarovsky E."/>
            <person name="Zhu S."/>
            <person name="Zimmer A."/>
            <person name="Hide W."/>
            <person name="Bult C."/>
            <person name="Grimmond S.M."/>
            <person name="Teasdale R.D."/>
            <person name="Liu E.T."/>
            <person name="Brusic V."/>
            <person name="Quackenbush J."/>
            <person name="Wahlestedt C."/>
            <person name="Mattick J.S."/>
            <person name="Hume D.A."/>
            <person name="Kai C."/>
            <person name="Sasaki D."/>
            <person name="Tomaru Y."/>
            <person name="Fukuda S."/>
            <person name="Kanamori-Katayama M."/>
            <person name="Suzuki M."/>
            <person name="Aoki J."/>
            <person name="Arakawa T."/>
            <person name="Iida J."/>
            <person name="Imamura K."/>
            <person name="Itoh M."/>
            <person name="Kato T."/>
            <person name="Kawaji H."/>
            <person name="Kawagashira N."/>
            <person name="Kawashima T."/>
            <person name="Kojima M."/>
            <person name="Kondo S."/>
            <person name="Konno H."/>
            <person name="Nakano K."/>
            <person name="Ninomiya N."/>
            <person name="Nishio T."/>
            <person name="Okada M."/>
            <person name="Plessy C."/>
            <person name="Shibata K."/>
            <person name="Shiraki T."/>
            <person name="Suzuki S."/>
            <person name="Tagami M."/>
            <person name="Waki K."/>
            <person name="Watahiki A."/>
            <person name="Okamura-Oho Y."/>
            <person name="Suzuki H."/>
            <person name="Kawai J."/>
            <person name="Hayashizaki Y."/>
        </authorList>
    </citation>
    <scope>NUCLEOTIDE SEQUENCE [LARGE SCALE MRNA] (ISOFORMS 1 AND 2)</scope>
    <source>
        <strain>C57BL/6J</strain>
        <tissue>Skin</tissue>
    </source>
</reference>
<reference key="4">
    <citation type="journal article" date="2004" name="Genome Res.">
        <title>The status, quality, and expansion of the NIH full-length cDNA project: the Mammalian Gene Collection (MGC).</title>
        <authorList>
            <consortium name="The MGC Project Team"/>
        </authorList>
    </citation>
    <scope>NUCLEOTIDE SEQUENCE [LARGE SCALE MRNA] (ISOFORM 1)</scope>
    <source>
        <strain>FVB/N</strain>
        <tissue>Colon</tissue>
    </source>
</reference>
<reference key="5">
    <citation type="journal article" date="2013" name="Nucleic Acids Res.">
        <title>Alternative translation initiation augments the human mitochondrial proteome.</title>
        <authorList>
            <person name="Kazak L."/>
            <person name="Reyes A."/>
            <person name="Duncan A.L."/>
            <person name="Rorbach J."/>
            <person name="Wood S.R."/>
            <person name="Brea-Calvo G."/>
            <person name="Gammage P.A."/>
            <person name="Robinson A.J."/>
            <person name="Minczuk M."/>
            <person name="Holt I.J."/>
        </authorList>
    </citation>
    <scope>ALTERNATIVE INITIATION (ISOFORM 3)</scope>
    <scope>SUBCELLULAR LOCATION (ISOFORM 3)</scope>
</reference>
<comment type="function">
    <text evidence="3">DNA-dependent ATPase and 5'-3' DNA helicase required for the maintenance of both mitochondrial and nuclear genome stability. Efficiently unwinds G-quadruplex (G4) DNA structures and forked RNA-DNA hybrids. Resolves G4 structures, preventing replication pausing and double-strand breaks (DSBs) at G4 motifs. Involved in the maintenance of telomeric DNA. Inhibits telomere elongation, de novo telomere formation and telomere addition to DSBs via catalytic inhibition of telomerase. Reduces the processivity of telomerase by displacing active telomerase from DNA ends. Releases telomerase by unwinding the short telomerase RNA/telomeric DNA hybrid that is the intermediate in the telomerase reaction. Possesses an intrinsic strand annealing activity.</text>
</comment>
<comment type="catalytic activity">
    <reaction evidence="3">
        <text>Couples ATP hydrolysis with the unwinding of duplex DNA at the replication fork by translocating in the 5'-3' direction. This creates two antiparallel DNA single strands (ssDNA). The leading ssDNA polymer is the template for DNA polymerase III holoenzyme which synthesizes a continuous strand.</text>
        <dbReference type="EC" id="5.6.2.3"/>
    </reaction>
</comment>
<comment type="catalytic activity">
    <reaction evidence="3">
        <text>ATP + H2O = ADP + phosphate + H(+)</text>
        <dbReference type="Rhea" id="RHEA:13065"/>
        <dbReference type="ChEBI" id="CHEBI:15377"/>
        <dbReference type="ChEBI" id="CHEBI:15378"/>
        <dbReference type="ChEBI" id="CHEBI:30616"/>
        <dbReference type="ChEBI" id="CHEBI:43474"/>
        <dbReference type="ChEBI" id="CHEBI:456216"/>
        <dbReference type="EC" id="5.6.2.3"/>
    </reaction>
</comment>
<comment type="cofactor">
    <cofactor evidence="3">
        <name>Mg(2+)</name>
        <dbReference type="ChEBI" id="CHEBI:18420"/>
    </cofactor>
</comment>
<comment type="subunit">
    <text evidence="3 5">Monomer (By similarity). Interacts with telomerase.</text>
</comment>
<comment type="subcellular location">
    <subcellularLocation>
        <location evidence="3 5">Nucleus</location>
    </subcellularLocation>
</comment>
<comment type="subcellular location">
    <molecule>Isoform 3</molecule>
    <subcellularLocation>
        <location evidence="3 6">Mitochondrion</location>
    </subcellularLocation>
</comment>
<comment type="alternative products">
    <event type="alternative splicing"/>
    <event type="alternative initiation"/>
    <isoform>
        <id>Q80SX8-1</id>
        <name>1</name>
        <sequence type="displayed"/>
    </isoform>
    <isoform>
        <id>Q80SX8-2</id>
        <name>2</name>
        <sequence type="described" ref="VSP_026718 VSP_026719"/>
    </isoform>
    <isoform>
        <id>Q80SX8-3</id>
        <name>3</name>
        <sequence type="described" ref="VSP_047458"/>
    </isoform>
</comment>
<comment type="domain">
    <text evidence="1">The PIF1 N-terminal (PINT) domain enhances the interaction with ssDNA through intrinsic binding activity, it also harbors DNA strand-annealing activity.</text>
</comment>
<comment type="disruption phenotype">
    <text evidence="5">Mice do not exhibit any change in telomere length in thymocytes or plenocytes nor significant change in chromosome gain or rearrangements.</text>
</comment>
<comment type="miscellaneous">
    <molecule>Isoform 3</molecule>
    <text evidence="8">Produced by alternative initiation of isoform 1.</text>
</comment>
<comment type="similarity">
    <text evidence="3">Belongs to the helicase family. PIF1 subfamily.</text>
</comment>
<proteinExistence type="evidence at protein level"/>
<gene>
    <name evidence="3" type="primary">Pif1</name>
</gene>
<dbReference type="EC" id="5.6.2.3" evidence="3"/>
<dbReference type="EMBL" id="AY498715">
    <property type="protein sequence ID" value="AAS77397.1"/>
    <property type="molecule type" value="mRNA"/>
</dbReference>
<dbReference type="EMBL" id="AY100322">
    <property type="protein sequence ID" value="AAM50051.1"/>
    <property type="molecule type" value="mRNA"/>
</dbReference>
<dbReference type="EMBL" id="AY100323">
    <property type="protein sequence ID" value="AAM50052.1"/>
    <property type="molecule type" value="Genomic_DNA"/>
</dbReference>
<dbReference type="EMBL" id="AK028460">
    <property type="protein sequence ID" value="BAC25963.1"/>
    <property type="molecule type" value="mRNA"/>
</dbReference>
<dbReference type="EMBL" id="AK049353">
    <property type="protein sequence ID" value="BAC33702.1"/>
    <property type="molecule type" value="mRNA"/>
</dbReference>
<dbReference type="EMBL" id="BC046611">
    <property type="protein sequence ID" value="AAH46611.1"/>
    <property type="molecule type" value="mRNA"/>
</dbReference>
<dbReference type="RefSeq" id="NP_001408440.1">
    <molecule id="Q80SX8-1"/>
    <property type="nucleotide sequence ID" value="NM_001421511.1"/>
</dbReference>
<dbReference type="RefSeq" id="NP_766041.1">
    <property type="nucleotide sequence ID" value="NM_172453.3"/>
</dbReference>
<dbReference type="RefSeq" id="XP_006510982.1">
    <property type="nucleotide sequence ID" value="XM_006510919.2"/>
</dbReference>
<dbReference type="RefSeq" id="XP_006510983.1">
    <property type="nucleotide sequence ID" value="XM_006510920.2"/>
</dbReference>
<dbReference type="SMR" id="Q80SX8"/>
<dbReference type="FunCoup" id="Q80SX8">
    <property type="interactions" value="330"/>
</dbReference>
<dbReference type="STRING" id="10090.ENSMUSP00000049046"/>
<dbReference type="GlyGen" id="Q80SX8">
    <property type="glycosylation" value="1 site"/>
</dbReference>
<dbReference type="iPTMnet" id="Q80SX8"/>
<dbReference type="PhosphoSitePlus" id="Q80SX8"/>
<dbReference type="PaxDb" id="10090-ENSMUSP00000049046"/>
<dbReference type="ProteomicsDB" id="289498">
    <molecule id="Q80SX8-1"/>
</dbReference>
<dbReference type="ProteomicsDB" id="289499">
    <molecule id="Q80SX8-2"/>
</dbReference>
<dbReference type="ProteomicsDB" id="289500">
    <molecule id="Q80SX8-3"/>
</dbReference>
<dbReference type="Antibodypedia" id="4360">
    <property type="antibodies" value="118 antibodies from 23 providers"/>
</dbReference>
<dbReference type="DNASU" id="208084"/>
<dbReference type="Ensembl" id="ENSMUST00000239405.2">
    <molecule id="Q80SX8-1"/>
    <property type="protein sequence ID" value="ENSMUSP00000159314.2"/>
    <property type="gene ID" value="ENSMUSG00000041064.15"/>
</dbReference>
<dbReference type="GeneID" id="208084"/>
<dbReference type="KEGG" id="mmu:208084"/>
<dbReference type="UCSC" id="uc009qdp.2">
    <molecule id="Q80SX8-1"/>
    <property type="organism name" value="mouse"/>
</dbReference>
<dbReference type="AGR" id="MGI:2143057"/>
<dbReference type="CTD" id="80119"/>
<dbReference type="MGI" id="MGI:2143057">
    <property type="gene designation" value="Pif1"/>
</dbReference>
<dbReference type="VEuPathDB" id="HostDB:ENSMUSG00000041064"/>
<dbReference type="eggNOG" id="KOG0987">
    <property type="taxonomic scope" value="Eukaryota"/>
</dbReference>
<dbReference type="GeneTree" id="ENSGT00530000063561"/>
<dbReference type="HOGENOM" id="CLU_001613_7_1_1"/>
<dbReference type="InParanoid" id="Q80SX8"/>
<dbReference type="OrthoDB" id="272985at2759"/>
<dbReference type="PhylomeDB" id="Q80SX8"/>
<dbReference type="TreeFam" id="TF319207"/>
<dbReference type="Reactome" id="R-MMU-171319">
    <property type="pathway name" value="Telomere Extension By Telomerase"/>
</dbReference>
<dbReference type="BioGRID-ORCS" id="208084">
    <property type="hits" value="1 hit in 115 CRISPR screens"/>
</dbReference>
<dbReference type="ChiTaRS" id="Pif1">
    <property type="organism name" value="mouse"/>
</dbReference>
<dbReference type="PRO" id="PR:Q80SX8"/>
<dbReference type="Proteomes" id="UP000000589">
    <property type="component" value="Chromosome 9"/>
</dbReference>
<dbReference type="RNAct" id="Q80SX8">
    <property type="molecule type" value="protein"/>
</dbReference>
<dbReference type="Bgee" id="ENSMUSG00000041064">
    <property type="expression patterns" value="Expressed in ear vesicle and 137 other cell types or tissues"/>
</dbReference>
<dbReference type="ExpressionAtlas" id="Q80SX8">
    <property type="expression patterns" value="baseline and differential"/>
</dbReference>
<dbReference type="GO" id="GO:0005739">
    <property type="term" value="C:mitochondrion"/>
    <property type="evidence" value="ECO:0000315"/>
    <property type="project" value="MGI"/>
</dbReference>
<dbReference type="GO" id="GO:0005634">
    <property type="term" value="C:nucleus"/>
    <property type="evidence" value="ECO:0000314"/>
    <property type="project" value="MGI"/>
</dbReference>
<dbReference type="GO" id="GO:0043139">
    <property type="term" value="F:5'-3' DNA helicase activity"/>
    <property type="evidence" value="ECO:0007669"/>
    <property type="project" value="UniProtKB-UniRule"/>
</dbReference>
<dbReference type="GO" id="GO:0005524">
    <property type="term" value="F:ATP binding"/>
    <property type="evidence" value="ECO:0007669"/>
    <property type="project" value="UniProtKB-UniRule"/>
</dbReference>
<dbReference type="GO" id="GO:0016887">
    <property type="term" value="F:ATP hydrolysis activity"/>
    <property type="evidence" value="ECO:0007669"/>
    <property type="project" value="RHEA"/>
</dbReference>
<dbReference type="GO" id="GO:0051880">
    <property type="term" value="F:G-quadruplex DNA binding"/>
    <property type="evidence" value="ECO:0007669"/>
    <property type="project" value="UniProtKB-UniRule"/>
</dbReference>
<dbReference type="GO" id="GO:0010521">
    <property type="term" value="F:telomerase inhibitor activity"/>
    <property type="evidence" value="ECO:0007669"/>
    <property type="project" value="UniProtKB-UniRule"/>
</dbReference>
<dbReference type="GO" id="GO:0006310">
    <property type="term" value="P:DNA recombination"/>
    <property type="evidence" value="ECO:0007669"/>
    <property type="project" value="UniProtKB-UniRule"/>
</dbReference>
<dbReference type="GO" id="GO:0006281">
    <property type="term" value="P:DNA repair"/>
    <property type="evidence" value="ECO:0007669"/>
    <property type="project" value="UniProtKB-UniRule"/>
</dbReference>
<dbReference type="GO" id="GO:0000002">
    <property type="term" value="P:mitochondrial genome maintenance"/>
    <property type="evidence" value="ECO:0007669"/>
    <property type="project" value="UniProtKB-UniRule"/>
</dbReference>
<dbReference type="GO" id="GO:0032211">
    <property type="term" value="P:negative regulation of telomere maintenance via telomerase"/>
    <property type="evidence" value="ECO:0007669"/>
    <property type="project" value="UniProtKB-UniRule"/>
</dbReference>
<dbReference type="GO" id="GO:0000723">
    <property type="term" value="P:telomere maintenance"/>
    <property type="evidence" value="ECO:0007669"/>
    <property type="project" value="InterPro"/>
</dbReference>
<dbReference type="CDD" id="cd18037">
    <property type="entry name" value="DEXSc_Pif1_like"/>
    <property type="match status" value="1"/>
</dbReference>
<dbReference type="CDD" id="cd18809">
    <property type="entry name" value="SF1_C_RecD"/>
    <property type="match status" value="1"/>
</dbReference>
<dbReference type="FunFam" id="3.40.50.300:FF:000805">
    <property type="entry name" value="ATP-dependent DNA helicase PIF1"/>
    <property type="match status" value="1"/>
</dbReference>
<dbReference type="FunFam" id="3.40.50.300:FF:003367">
    <property type="entry name" value="ATP-dependent DNA helicase PIF1"/>
    <property type="match status" value="1"/>
</dbReference>
<dbReference type="Gene3D" id="3.40.50.300">
    <property type="entry name" value="P-loop containing nucleotide triphosphate hydrolases"/>
    <property type="match status" value="2"/>
</dbReference>
<dbReference type="HAMAP" id="MF_03176">
    <property type="entry name" value="PIF1"/>
    <property type="match status" value="1"/>
</dbReference>
<dbReference type="InterPro" id="IPR010285">
    <property type="entry name" value="DNA_helicase_pif1-like_DEAD"/>
</dbReference>
<dbReference type="InterPro" id="IPR027417">
    <property type="entry name" value="P-loop_NTPase"/>
</dbReference>
<dbReference type="InterPro" id="IPR049163">
    <property type="entry name" value="Pif1-like_2B_dom"/>
</dbReference>
<dbReference type="InterPro" id="IPR051055">
    <property type="entry name" value="PIF1_helicase"/>
</dbReference>
<dbReference type="InterPro" id="IPR048293">
    <property type="entry name" value="PIF1_RRM3_pfh1"/>
</dbReference>
<dbReference type="PANTHER" id="PTHR47642">
    <property type="entry name" value="ATP-DEPENDENT DNA HELICASE"/>
    <property type="match status" value="1"/>
</dbReference>
<dbReference type="PANTHER" id="PTHR47642:SF7">
    <property type="entry name" value="ATP-DEPENDENT DNA HELICASE PIF1"/>
    <property type="match status" value="1"/>
</dbReference>
<dbReference type="Pfam" id="PF25344">
    <property type="entry name" value="PH_LRR1"/>
    <property type="match status" value="1"/>
</dbReference>
<dbReference type="Pfam" id="PF05970">
    <property type="entry name" value="PIF1"/>
    <property type="match status" value="1"/>
</dbReference>
<dbReference type="Pfam" id="PF21530">
    <property type="entry name" value="Pif1_2B_dom"/>
    <property type="match status" value="1"/>
</dbReference>
<dbReference type="SUPFAM" id="SSF52540">
    <property type="entry name" value="P-loop containing nucleoside triphosphate hydrolases"/>
    <property type="match status" value="2"/>
</dbReference>
<organism>
    <name type="scientific">Mus musculus</name>
    <name type="common">Mouse</name>
    <dbReference type="NCBI Taxonomy" id="10090"/>
    <lineage>
        <taxon>Eukaryota</taxon>
        <taxon>Metazoa</taxon>
        <taxon>Chordata</taxon>
        <taxon>Craniata</taxon>
        <taxon>Vertebrata</taxon>
        <taxon>Euteleostomi</taxon>
        <taxon>Mammalia</taxon>
        <taxon>Eutheria</taxon>
        <taxon>Euarchontoglires</taxon>
        <taxon>Glires</taxon>
        <taxon>Rodentia</taxon>
        <taxon>Myomorpha</taxon>
        <taxon>Muroidea</taxon>
        <taxon>Muridae</taxon>
        <taxon>Murinae</taxon>
        <taxon>Mus</taxon>
        <taxon>Mus</taxon>
    </lineage>
</organism>
<evidence type="ECO:0000250" key="1"/>
<evidence type="ECO:0000250" key="2">
    <source>
        <dbReference type="UniProtKB" id="Q9H611"/>
    </source>
</evidence>
<evidence type="ECO:0000255" key="3">
    <source>
        <dbReference type="HAMAP-Rule" id="MF_03176"/>
    </source>
</evidence>
<evidence type="ECO:0000256" key="4">
    <source>
        <dbReference type="SAM" id="MobiDB-lite"/>
    </source>
</evidence>
<evidence type="ECO:0000269" key="5">
    <source>
    </source>
</evidence>
<evidence type="ECO:0000269" key="6">
    <source>
    </source>
</evidence>
<evidence type="ECO:0000303" key="7">
    <source>
    </source>
</evidence>
<evidence type="ECO:0000305" key="8"/>
<sequence>MRSGLCTPAEALEMPSSTEAATDECDDAELRCRVAVEELSPGGQPRKRQALRAAELSLGRNERRELMLRLQAPGPTGRPRCFPLRAVRLFTRFAATGRSTLRLPTDGVPGAGSVQLLLSDCPPERLRRFLRTLRLKLAVAPGPGPASARAQLLGPRPRDFVTISPVQPEELQRAAATKAPDSALEKRPMESQTSTEAPRWPLPVKKLRMPSTKPKLSEEQAAVLRMVLKGQSIFFTGSAGTGKSYLLKHILGSLPPTGTVATASTGVAACHIGGTTLHAFAGIGSGQAPLAQCMALANRPGVRQGWLNCQRLVIDEISMVEADFFDKLEAVARAVRQQKKPFGGIQLIICGDFLQLPPVTKGSQQPQFCFQAKSWRRCVPVILELTEVWRQADQTFISLLQAVRLGRCSDEVTRQLRATAAHKVGRDGIVATRLCTHQDDVALTNEKWLKALPGDVHSFEAIDSDPELSRTLDAQCPVSRVLQLKLGAQVMLVKNLAVSRGLVNGARGVVVGFESEGRGLPRVRFLCGITEVIRTDRWTVQVTGGQYLSRQQLPLQLAWAISIHKSQGMSLDCVEISLGRVFASGQAYVALSRARSLQGLRVLDFDPTVVRCDSRVLHFYATLRQGRGLSLESQDDEEANSDLENMDPNL</sequence>
<keyword id="KW-0024">Alternative initiation</keyword>
<keyword id="KW-0025">Alternative splicing</keyword>
<keyword id="KW-0067">ATP-binding</keyword>
<keyword id="KW-0227">DNA damage</keyword>
<keyword id="KW-0233">DNA recombination</keyword>
<keyword id="KW-0234">DNA repair</keyword>
<keyword id="KW-0238">DNA-binding</keyword>
<keyword id="KW-0347">Helicase</keyword>
<keyword id="KW-0378">Hydrolase</keyword>
<keyword id="KW-0413">Isomerase</keyword>
<keyword id="KW-0496">Mitochondrion</keyword>
<keyword id="KW-0547">Nucleotide-binding</keyword>
<keyword id="KW-0539">Nucleus</keyword>
<keyword id="KW-0597">Phosphoprotein</keyword>
<keyword id="KW-1185">Reference proteome</keyword>
<accession>Q80SX8</accession>
<accession>Q80W44</accession>
<accession>Q8BIZ3</accession>
<accession>Q8BJ72</accession>
<name>PIF1_MOUSE</name>